<protein>
    <recommendedName>
        <fullName evidence="2">Formamidopyrimidine-DNA glycosylase</fullName>
        <shortName evidence="2">Fapy-DNA glycosylase</shortName>
        <ecNumber evidence="2">3.2.2.23</ecNumber>
    </recommendedName>
    <alternativeName>
        <fullName evidence="2">DNA-(apurinic or apyrimidinic site) lyase MutM</fullName>
        <shortName evidence="2">AP lyase MutM</shortName>
        <ecNumber evidence="2">4.2.99.18</ecNumber>
    </alternativeName>
</protein>
<name>FPG_CUPNH</name>
<reference key="1">
    <citation type="journal article" date="2006" name="Nat. Biotechnol.">
        <title>Genome sequence of the bioplastic-producing 'Knallgas' bacterium Ralstonia eutropha H16.</title>
        <authorList>
            <person name="Pohlmann A."/>
            <person name="Fricke W.F."/>
            <person name="Reinecke F."/>
            <person name="Kusian B."/>
            <person name="Liesegang H."/>
            <person name="Cramm R."/>
            <person name="Eitinger T."/>
            <person name="Ewering C."/>
            <person name="Poetter M."/>
            <person name="Schwartz E."/>
            <person name="Strittmatter A."/>
            <person name="Voss I."/>
            <person name="Gottschalk G."/>
            <person name="Steinbuechel A."/>
            <person name="Friedrich B."/>
            <person name="Bowien B."/>
        </authorList>
    </citation>
    <scope>NUCLEOTIDE SEQUENCE [LARGE SCALE GENOMIC DNA]</scope>
    <source>
        <strain>ATCC 17699 / DSM 428 / KCTC 22496 / NCIMB 10442 / H16 / Stanier 337</strain>
    </source>
</reference>
<gene>
    <name evidence="2" type="primary">mutM</name>
    <name evidence="2" type="synonym">fpg</name>
    <name type="ordered locus">H16_A0377</name>
</gene>
<proteinExistence type="inferred from homology"/>
<organism>
    <name type="scientific">Cupriavidus necator (strain ATCC 17699 / DSM 428 / KCTC 22496 / NCIMB 10442 / H16 / Stanier 337)</name>
    <name type="common">Ralstonia eutropha</name>
    <dbReference type="NCBI Taxonomy" id="381666"/>
    <lineage>
        <taxon>Bacteria</taxon>
        <taxon>Pseudomonadati</taxon>
        <taxon>Pseudomonadota</taxon>
        <taxon>Betaproteobacteria</taxon>
        <taxon>Burkholderiales</taxon>
        <taxon>Burkholderiaceae</taxon>
        <taxon>Cupriavidus</taxon>
    </lineage>
</organism>
<feature type="initiator methionine" description="Removed" evidence="1">
    <location>
        <position position="1"/>
    </location>
</feature>
<feature type="chain" id="PRO_1000008748" description="Formamidopyrimidine-DNA glycosylase">
    <location>
        <begin position="2"/>
        <end position="292"/>
    </location>
</feature>
<feature type="zinc finger region" description="FPG-type" evidence="2">
    <location>
        <begin position="258"/>
        <end position="292"/>
    </location>
</feature>
<feature type="active site" description="Schiff-base intermediate with DNA" evidence="2">
    <location>
        <position position="2"/>
    </location>
</feature>
<feature type="active site" description="Proton donor" evidence="2">
    <location>
        <position position="3"/>
    </location>
</feature>
<feature type="active site" description="Proton donor; for beta-elimination activity" evidence="2">
    <location>
        <position position="58"/>
    </location>
</feature>
<feature type="active site" description="Proton donor; for delta-elimination activity" evidence="2">
    <location>
        <position position="282"/>
    </location>
</feature>
<feature type="binding site" evidence="2">
    <location>
        <position position="98"/>
    </location>
    <ligand>
        <name>DNA</name>
        <dbReference type="ChEBI" id="CHEBI:16991"/>
    </ligand>
</feature>
<feature type="binding site" evidence="2">
    <location>
        <position position="128"/>
    </location>
    <ligand>
        <name>DNA</name>
        <dbReference type="ChEBI" id="CHEBI:16991"/>
    </ligand>
</feature>
<feature type="binding site" evidence="2">
    <location>
        <position position="173"/>
    </location>
    <ligand>
        <name>DNA</name>
        <dbReference type="ChEBI" id="CHEBI:16991"/>
    </ligand>
</feature>
<comment type="function">
    <text evidence="2">Involved in base excision repair of DNA damaged by oxidation or by mutagenic agents. Acts as a DNA glycosylase that recognizes and removes damaged bases. Has a preference for oxidized purines, such as 7,8-dihydro-8-oxoguanine (8-oxoG). Has AP (apurinic/apyrimidinic) lyase activity and introduces nicks in the DNA strand. Cleaves the DNA backbone by beta-delta elimination to generate a single-strand break at the site of the removed base with both 3'- and 5'-phosphates.</text>
</comment>
<comment type="catalytic activity">
    <reaction evidence="2">
        <text>Hydrolysis of DNA containing ring-opened 7-methylguanine residues, releasing 2,6-diamino-4-hydroxy-5-(N-methyl)formamidopyrimidine.</text>
        <dbReference type="EC" id="3.2.2.23"/>
    </reaction>
</comment>
<comment type="catalytic activity">
    <reaction evidence="2">
        <text>2'-deoxyribonucleotide-(2'-deoxyribose 5'-phosphate)-2'-deoxyribonucleotide-DNA = a 3'-end 2'-deoxyribonucleotide-(2,3-dehydro-2,3-deoxyribose 5'-phosphate)-DNA + a 5'-end 5'-phospho-2'-deoxyribonucleoside-DNA + H(+)</text>
        <dbReference type="Rhea" id="RHEA:66592"/>
        <dbReference type="Rhea" id="RHEA-COMP:13180"/>
        <dbReference type="Rhea" id="RHEA-COMP:16897"/>
        <dbReference type="Rhea" id="RHEA-COMP:17067"/>
        <dbReference type="ChEBI" id="CHEBI:15378"/>
        <dbReference type="ChEBI" id="CHEBI:136412"/>
        <dbReference type="ChEBI" id="CHEBI:157695"/>
        <dbReference type="ChEBI" id="CHEBI:167181"/>
        <dbReference type="EC" id="4.2.99.18"/>
    </reaction>
</comment>
<comment type="cofactor">
    <cofactor evidence="2">
        <name>Zn(2+)</name>
        <dbReference type="ChEBI" id="CHEBI:29105"/>
    </cofactor>
    <text evidence="2">Binds 1 zinc ion per subunit.</text>
</comment>
<comment type="subunit">
    <text evidence="2">Monomer.</text>
</comment>
<comment type="similarity">
    <text evidence="2">Belongs to the FPG family.</text>
</comment>
<evidence type="ECO:0000250" key="1"/>
<evidence type="ECO:0000255" key="2">
    <source>
        <dbReference type="HAMAP-Rule" id="MF_00103"/>
    </source>
</evidence>
<accession>Q0KEP4</accession>
<keyword id="KW-0227">DNA damage</keyword>
<keyword id="KW-0234">DNA repair</keyword>
<keyword id="KW-0238">DNA-binding</keyword>
<keyword id="KW-0326">Glycosidase</keyword>
<keyword id="KW-0378">Hydrolase</keyword>
<keyword id="KW-0456">Lyase</keyword>
<keyword id="KW-0479">Metal-binding</keyword>
<keyword id="KW-0511">Multifunctional enzyme</keyword>
<keyword id="KW-1185">Reference proteome</keyword>
<keyword id="KW-0862">Zinc</keyword>
<keyword id="KW-0863">Zinc-finger</keyword>
<sequence length="292" mass="31923">MPELPEVEVTRRGLLPHVVGRRIAAVTVRHRGLRWPVDPQLEMRLAQRVVRRIERRGKYLLLECVSEAAGEPAGWLLVHLGMTGTLRVLPEAPSPGAHDHLDLVLAPGPGAALGTKPGTIVLRFRDPRRFGAILWSTLPEAELPSHPLLRTLGIEPFDPAFDGAWLHRHTRGRSAAIKTVLLAGGIVVGVGNIYASESLFRAGIRPTTPAGRLSRARCDRLAQAVRETLAQAIERGGSTLRDFVGSDGASGYFQLDCLVYDRAGQPCRVCATPVRQIVQGQRSTFYCPNCQH</sequence>
<dbReference type="EC" id="3.2.2.23" evidence="2"/>
<dbReference type="EC" id="4.2.99.18" evidence="2"/>
<dbReference type="EMBL" id="AM260479">
    <property type="protein sequence ID" value="CAJ91527.1"/>
    <property type="molecule type" value="Genomic_DNA"/>
</dbReference>
<dbReference type="RefSeq" id="WP_011614481.1">
    <property type="nucleotide sequence ID" value="NC_008313.1"/>
</dbReference>
<dbReference type="SMR" id="Q0KEP4"/>
<dbReference type="STRING" id="381666.H16_A0377"/>
<dbReference type="KEGG" id="reh:H16_A0377"/>
<dbReference type="PATRIC" id="fig|381666.6.peg.741"/>
<dbReference type="eggNOG" id="COG0266">
    <property type="taxonomic scope" value="Bacteria"/>
</dbReference>
<dbReference type="HOGENOM" id="CLU_038423_1_1_4"/>
<dbReference type="OrthoDB" id="9800855at2"/>
<dbReference type="Proteomes" id="UP000008210">
    <property type="component" value="Chromosome 1"/>
</dbReference>
<dbReference type="GO" id="GO:0034039">
    <property type="term" value="F:8-oxo-7,8-dihydroguanine DNA N-glycosylase activity"/>
    <property type="evidence" value="ECO:0007669"/>
    <property type="project" value="TreeGrafter"/>
</dbReference>
<dbReference type="GO" id="GO:0140078">
    <property type="term" value="F:class I DNA-(apurinic or apyrimidinic site) endonuclease activity"/>
    <property type="evidence" value="ECO:0007669"/>
    <property type="project" value="UniProtKB-EC"/>
</dbReference>
<dbReference type="GO" id="GO:0003684">
    <property type="term" value="F:damaged DNA binding"/>
    <property type="evidence" value="ECO:0007669"/>
    <property type="project" value="InterPro"/>
</dbReference>
<dbReference type="GO" id="GO:0008270">
    <property type="term" value="F:zinc ion binding"/>
    <property type="evidence" value="ECO:0007669"/>
    <property type="project" value="UniProtKB-UniRule"/>
</dbReference>
<dbReference type="GO" id="GO:0006284">
    <property type="term" value="P:base-excision repair"/>
    <property type="evidence" value="ECO:0007669"/>
    <property type="project" value="InterPro"/>
</dbReference>
<dbReference type="CDD" id="cd08966">
    <property type="entry name" value="EcFpg-like_N"/>
    <property type="match status" value="1"/>
</dbReference>
<dbReference type="FunFam" id="1.10.8.50:FF:000003">
    <property type="entry name" value="Formamidopyrimidine-DNA glycosylase"/>
    <property type="match status" value="1"/>
</dbReference>
<dbReference type="Gene3D" id="1.10.8.50">
    <property type="match status" value="1"/>
</dbReference>
<dbReference type="Gene3D" id="3.20.190.10">
    <property type="entry name" value="MutM-like, N-terminal"/>
    <property type="match status" value="1"/>
</dbReference>
<dbReference type="HAMAP" id="MF_00103">
    <property type="entry name" value="Fapy_DNA_glycosyl"/>
    <property type="match status" value="1"/>
</dbReference>
<dbReference type="InterPro" id="IPR015886">
    <property type="entry name" value="DNA_glyclase/AP_lyase_DNA-bd"/>
</dbReference>
<dbReference type="InterPro" id="IPR015887">
    <property type="entry name" value="DNA_glyclase_Znf_dom_DNA_BS"/>
</dbReference>
<dbReference type="InterPro" id="IPR020629">
    <property type="entry name" value="Formamido-pyr_DNA_Glyclase"/>
</dbReference>
<dbReference type="InterPro" id="IPR012319">
    <property type="entry name" value="FPG_cat"/>
</dbReference>
<dbReference type="InterPro" id="IPR035937">
    <property type="entry name" value="MutM-like_N-ter"/>
</dbReference>
<dbReference type="InterPro" id="IPR010979">
    <property type="entry name" value="Ribosomal_uS13-like_H2TH"/>
</dbReference>
<dbReference type="InterPro" id="IPR000214">
    <property type="entry name" value="Znf_DNA_glyclase/AP_lyase"/>
</dbReference>
<dbReference type="InterPro" id="IPR010663">
    <property type="entry name" value="Znf_FPG/IleRS"/>
</dbReference>
<dbReference type="NCBIfam" id="TIGR00577">
    <property type="entry name" value="fpg"/>
    <property type="match status" value="1"/>
</dbReference>
<dbReference type="NCBIfam" id="NF002211">
    <property type="entry name" value="PRK01103.1"/>
    <property type="match status" value="1"/>
</dbReference>
<dbReference type="PANTHER" id="PTHR22993">
    <property type="entry name" value="FORMAMIDOPYRIMIDINE-DNA GLYCOSYLASE"/>
    <property type="match status" value="1"/>
</dbReference>
<dbReference type="PANTHER" id="PTHR22993:SF9">
    <property type="entry name" value="FORMAMIDOPYRIMIDINE-DNA GLYCOSYLASE"/>
    <property type="match status" value="1"/>
</dbReference>
<dbReference type="Pfam" id="PF01149">
    <property type="entry name" value="Fapy_DNA_glyco"/>
    <property type="match status" value="1"/>
</dbReference>
<dbReference type="Pfam" id="PF06831">
    <property type="entry name" value="H2TH"/>
    <property type="match status" value="1"/>
</dbReference>
<dbReference type="Pfam" id="PF06827">
    <property type="entry name" value="zf-FPG_IleRS"/>
    <property type="match status" value="1"/>
</dbReference>
<dbReference type="SMART" id="SM00898">
    <property type="entry name" value="Fapy_DNA_glyco"/>
    <property type="match status" value="1"/>
</dbReference>
<dbReference type="SMART" id="SM01232">
    <property type="entry name" value="H2TH"/>
    <property type="match status" value="1"/>
</dbReference>
<dbReference type="SUPFAM" id="SSF57716">
    <property type="entry name" value="Glucocorticoid receptor-like (DNA-binding domain)"/>
    <property type="match status" value="1"/>
</dbReference>
<dbReference type="SUPFAM" id="SSF81624">
    <property type="entry name" value="N-terminal domain of MutM-like DNA repair proteins"/>
    <property type="match status" value="1"/>
</dbReference>
<dbReference type="SUPFAM" id="SSF46946">
    <property type="entry name" value="S13-like H2TH domain"/>
    <property type="match status" value="1"/>
</dbReference>
<dbReference type="PROSITE" id="PS51068">
    <property type="entry name" value="FPG_CAT"/>
    <property type="match status" value="1"/>
</dbReference>
<dbReference type="PROSITE" id="PS01242">
    <property type="entry name" value="ZF_FPG_1"/>
    <property type="match status" value="1"/>
</dbReference>
<dbReference type="PROSITE" id="PS51066">
    <property type="entry name" value="ZF_FPG_2"/>
    <property type="match status" value="1"/>
</dbReference>